<evidence type="ECO:0000250" key="1"/>
<evidence type="ECO:0000255" key="2"/>
<evidence type="ECO:0000255" key="3">
    <source>
        <dbReference type="PROSITE-ProRule" id="PRU00384"/>
    </source>
</evidence>
<evidence type="ECO:0000256" key="4">
    <source>
        <dbReference type="SAM" id="MobiDB-lite"/>
    </source>
</evidence>
<evidence type="ECO:0000269" key="5">
    <source>
    </source>
</evidence>
<evidence type="ECO:0000303" key="6">
    <source>
    </source>
</evidence>
<name>EMIL3_HUMAN</name>
<reference key="1">
    <citation type="journal article" date="2004" name="Biochem. Biophys. Res. Commun.">
        <title>Molecular cloning and characterization of a novel gene, EMILIN-5, and its possible involvement in skeletal development.</title>
        <authorList>
            <person name="Doi M."/>
            <person name="Nagano A."/>
            <person name="Nakamura Y."/>
        </authorList>
    </citation>
    <scope>NUCLEOTIDE SEQUENCE [MRNA] (ISOFORM 1)</scope>
    <source>
        <tissue>Mesenchymal stem cell</tissue>
    </source>
</reference>
<reference key="2">
    <citation type="journal article" date="2001" name="Nature">
        <title>The DNA sequence and comparative analysis of human chromosome 20.</title>
        <authorList>
            <person name="Deloukas P."/>
            <person name="Matthews L.H."/>
            <person name="Ashurst J.L."/>
            <person name="Burton J."/>
            <person name="Gilbert J.G.R."/>
            <person name="Jones M."/>
            <person name="Stavrides G."/>
            <person name="Almeida J.P."/>
            <person name="Babbage A.K."/>
            <person name="Bagguley C.L."/>
            <person name="Bailey J."/>
            <person name="Barlow K.F."/>
            <person name="Bates K.N."/>
            <person name="Beard L.M."/>
            <person name="Beare D.M."/>
            <person name="Beasley O.P."/>
            <person name="Bird C.P."/>
            <person name="Blakey S.E."/>
            <person name="Bridgeman A.M."/>
            <person name="Brown A.J."/>
            <person name="Buck D."/>
            <person name="Burrill W.D."/>
            <person name="Butler A.P."/>
            <person name="Carder C."/>
            <person name="Carter N.P."/>
            <person name="Chapman J.C."/>
            <person name="Clamp M."/>
            <person name="Clark G."/>
            <person name="Clark L.N."/>
            <person name="Clark S.Y."/>
            <person name="Clee C.M."/>
            <person name="Clegg S."/>
            <person name="Cobley V.E."/>
            <person name="Collier R.E."/>
            <person name="Connor R.E."/>
            <person name="Corby N.R."/>
            <person name="Coulson A."/>
            <person name="Coville G.J."/>
            <person name="Deadman R."/>
            <person name="Dhami P.D."/>
            <person name="Dunn M."/>
            <person name="Ellington A.G."/>
            <person name="Frankland J.A."/>
            <person name="Fraser A."/>
            <person name="French L."/>
            <person name="Garner P."/>
            <person name="Grafham D.V."/>
            <person name="Griffiths C."/>
            <person name="Griffiths M.N.D."/>
            <person name="Gwilliam R."/>
            <person name="Hall R.E."/>
            <person name="Hammond S."/>
            <person name="Harley J.L."/>
            <person name="Heath P.D."/>
            <person name="Ho S."/>
            <person name="Holden J.L."/>
            <person name="Howden P.J."/>
            <person name="Huckle E."/>
            <person name="Hunt A.R."/>
            <person name="Hunt S.E."/>
            <person name="Jekosch K."/>
            <person name="Johnson C.M."/>
            <person name="Johnson D."/>
            <person name="Kay M.P."/>
            <person name="Kimberley A.M."/>
            <person name="King A."/>
            <person name="Knights A."/>
            <person name="Laird G.K."/>
            <person name="Lawlor S."/>
            <person name="Lehvaeslaiho M.H."/>
            <person name="Leversha M.A."/>
            <person name="Lloyd C."/>
            <person name="Lloyd D.M."/>
            <person name="Lovell J.D."/>
            <person name="Marsh V.L."/>
            <person name="Martin S.L."/>
            <person name="McConnachie L.J."/>
            <person name="McLay K."/>
            <person name="McMurray A.A."/>
            <person name="Milne S.A."/>
            <person name="Mistry D."/>
            <person name="Moore M.J.F."/>
            <person name="Mullikin J.C."/>
            <person name="Nickerson T."/>
            <person name="Oliver K."/>
            <person name="Parker A."/>
            <person name="Patel R."/>
            <person name="Pearce T.A.V."/>
            <person name="Peck A.I."/>
            <person name="Phillimore B.J.C.T."/>
            <person name="Prathalingam S.R."/>
            <person name="Plumb R.W."/>
            <person name="Ramsay H."/>
            <person name="Rice C.M."/>
            <person name="Ross M.T."/>
            <person name="Scott C.E."/>
            <person name="Sehra H.K."/>
            <person name="Shownkeen R."/>
            <person name="Sims S."/>
            <person name="Skuce C.D."/>
            <person name="Smith M.L."/>
            <person name="Soderlund C."/>
            <person name="Steward C.A."/>
            <person name="Sulston J.E."/>
            <person name="Swann R.M."/>
            <person name="Sycamore N."/>
            <person name="Taylor R."/>
            <person name="Tee L."/>
            <person name="Thomas D.W."/>
            <person name="Thorpe A."/>
            <person name="Tracey A."/>
            <person name="Tromans A.C."/>
            <person name="Vaudin M."/>
            <person name="Wall M."/>
            <person name="Wallis J.M."/>
            <person name="Whitehead S.L."/>
            <person name="Whittaker P."/>
            <person name="Willey D.L."/>
            <person name="Williams L."/>
            <person name="Williams S.A."/>
            <person name="Wilming L."/>
            <person name="Wray P.W."/>
            <person name="Hubbard T."/>
            <person name="Durbin R.M."/>
            <person name="Bentley D.R."/>
            <person name="Beck S."/>
            <person name="Rogers J."/>
        </authorList>
    </citation>
    <scope>NUCLEOTIDE SEQUENCE [LARGE SCALE GENOMIC DNA]</scope>
</reference>
<reference key="3">
    <citation type="journal article" date="2004" name="Genome Res.">
        <title>The status, quality, and expansion of the NIH full-length cDNA project: the Mammalian Gene Collection (MGC).</title>
        <authorList>
            <consortium name="The MGC Project Team"/>
        </authorList>
    </citation>
    <scope>NUCLEOTIDE SEQUENCE [LARGE SCALE MRNA] (ISOFORMS 1 AND 2)</scope>
    <scope>VARIANT ASN-532</scope>
</reference>
<reference key="4">
    <citation type="journal article" date="2007" name="BMC Genomics">
        <title>The full-ORF clone resource of the German cDNA consortium.</title>
        <authorList>
            <person name="Bechtel S."/>
            <person name="Rosenfelder H."/>
            <person name="Duda A."/>
            <person name="Schmidt C.P."/>
            <person name="Ernst U."/>
            <person name="Wellenreuther R."/>
            <person name="Mehrle A."/>
            <person name="Schuster C."/>
            <person name="Bahr A."/>
            <person name="Bloecker H."/>
            <person name="Heubner D."/>
            <person name="Hoerlein A."/>
            <person name="Michel G."/>
            <person name="Wedler H."/>
            <person name="Koehrer K."/>
            <person name="Ottenwaelder B."/>
            <person name="Poustka A."/>
            <person name="Wiemann S."/>
            <person name="Schupp I."/>
        </authorList>
    </citation>
    <scope>NUCLEOTIDE SEQUENCE [LARGE SCALE MRNA] OF 304-766 (ISOFORM 1)</scope>
    <source>
        <tissue>Testis</tissue>
    </source>
</reference>
<sequence length="766" mass="82647">MGRRRLLVWLCAVAALLSGAQARGTPLLARPAPPGASRYSLYTTGWRPRLRPGPHKALCAYVVHRNVTCILQEGAESYVKAEYRQCRWGPKCPGTVTYRTVLRPKYKVGYKTVTDLAWRCCPGFTGKRCPEHLTDHGAASPQLEPEPQIPSGQLDPGPRPPSYSRAAPSPHGRKGPGLFGERLERLEGDVQRLAQTYGTLSGLVASHEDPNRMTGGPRAPAVPVGFGVIPEGLVGPGDRARGPLTPPLDEILSKVTEVSNTLQTKVQLLDKVHGLALGHEAHLQRLREAPPSPLTSLALLEEYVDRRLHRLWGSLLDGFEQKLQGVQSECDLRVQEVRRQCEEGQAASRRLHQSLDGRELALRQELSQLGSQLQGLSVSGRGSCCGQLALINARMDGLERALQAVTETQRGPGAPAGDELTRLSAAMLEGGVDGLLEGLETLNGTEGGARGCCLRLDMGGWGVGGFGTMLEERVQSLEERLATLAGELSHDSASPGRSARPLVQTELAVLEQRLVSLETSCTPSTTSAILDSLVAEVKAWQSRSEALLRQVASHAALLQQLNGTVAEVQGQLAEGTGSSLQGEITLLKVNLNSVSKSLTGLSDSVSQYSDAFLAANTSLDERERKVEAEVQAIQEQVSSQGSRLQAGHRQVLNLRGELEQLKAGVAKVASGLSRCQDTAQKLQHTVGHFDQRVAQVEGACRRLGLLAAGLDSLPTEPLRPREGLWSHVDQLNRTLAQHTQDIARLRDDLLDCQAQLAEQVRPGQAN</sequence>
<proteinExistence type="evidence at protein level"/>
<comment type="interaction">
    <interactant intactId="EBI-3197883">
        <id>Q9NT22</id>
    </interactant>
    <interactant intactId="EBI-1050106">
        <id>O75934</id>
        <label>BCAS2</label>
    </interactant>
    <organismsDiffer>false</organismsDiffer>
    <experiments>3</experiments>
</comment>
<comment type="interaction">
    <interactant intactId="EBI-3197883">
        <id>Q9NT22</id>
    </interactant>
    <interactant intactId="EBI-10961624">
        <id>Q2TAC2-2</id>
        <label>CCDC57</label>
    </interactant>
    <organismsDiffer>false</organismsDiffer>
    <experiments>3</experiments>
</comment>
<comment type="interaction">
    <interactant intactId="EBI-3197883">
        <id>Q9NT22</id>
    </interactant>
    <interactant intactId="EBI-3197883">
        <id>Q9NT22</id>
        <label>EMILIN3</label>
    </interactant>
    <organismsDiffer>false</organismsDiffer>
    <experiments>3</experiments>
</comment>
<comment type="interaction">
    <interactant intactId="EBI-3197883">
        <id>Q9NT22</id>
    </interactant>
    <interactant intactId="EBI-740282">
        <id>Q9NVF7</id>
        <label>FBXO28</label>
    </interactant>
    <organismsDiffer>false</organismsDiffer>
    <experiments>6</experiments>
</comment>
<comment type="interaction">
    <interactant intactId="EBI-3197883">
        <id>Q9NT22</id>
    </interactant>
    <interactant intactId="EBI-739467">
        <id>Q9H8Y8</id>
        <label>GORASP2</label>
    </interactant>
    <organismsDiffer>false</organismsDiffer>
    <experiments>5</experiments>
</comment>
<comment type="interaction">
    <interactant intactId="EBI-3197883">
        <id>Q9NT22</id>
    </interactant>
    <interactant intactId="EBI-1104564">
        <id>Q9Y316</id>
        <label>MEMO1</label>
    </interactant>
    <organismsDiffer>false</organismsDiffer>
    <experiments>3</experiments>
</comment>
<comment type="interaction">
    <interactant intactId="EBI-3197883">
        <id>Q9NT22</id>
    </interactant>
    <interactant intactId="EBI-741158">
        <id>Q96HA8</id>
        <label>NTAQ1</label>
    </interactant>
    <organismsDiffer>false</organismsDiffer>
    <experiments>3</experiments>
</comment>
<comment type="interaction">
    <interactant intactId="EBI-3197883">
        <id>Q9NT22</id>
    </interactant>
    <interactant intactId="EBI-727004">
        <id>O00560</id>
        <label>SDCBP</label>
    </interactant>
    <organismsDiffer>false</organismsDiffer>
    <experiments>3</experiments>
</comment>
<comment type="subcellular location">
    <subcellularLocation>
        <location evidence="1">Secreted</location>
        <location evidence="1">Extracellular space</location>
        <location evidence="1">Extracellular matrix</location>
    </subcellularLocation>
</comment>
<comment type="alternative products">
    <event type="alternative splicing"/>
    <isoform>
        <id>Q9NT22-1</id>
        <name>1</name>
        <sequence type="displayed"/>
    </isoform>
    <isoform>
        <id>Q9NT22-2</id>
        <name>2</name>
        <sequence type="described" ref="VSP_055481"/>
    </isoform>
</comment>
<organism>
    <name type="scientific">Homo sapiens</name>
    <name type="common">Human</name>
    <dbReference type="NCBI Taxonomy" id="9606"/>
    <lineage>
        <taxon>Eukaryota</taxon>
        <taxon>Metazoa</taxon>
        <taxon>Chordata</taxon>
        <taxon>Craniata</taxon>
        <taxon>Vertebrata</taxon>
        <taxon>Euteleostomi</taxon>
        <taxon>Mammalia</taxon>
        <taxon>Eutheria</taxon>
        <taxon>Euarchontoglires</taxon>
        <taxon>Primates</taxon>
        <taxon>Haplorrhini</taxon>
        <taxon>Catarrhini</taxon>
        <taxon>Hominidae</taxon>
        <taxon>Homo</taxon>
    </lineage>
</organism>
<feature type="signal peptide" evidence="2">
    <location>
        <begin position="1"/>
        <end position="22"/>
    </location>
</feature>
<feature type="chain" id="PRO_0000007819" description="EMILIN-3">
    <location>
        <begin position="23"/>
        <end position="766"/>
    </location>
</feature>
<feature type="domain" description="EMI" evidence="3">
    <location>
        <begin position="55"/>
        <end position="131"/>
    </location>
</feature>
<feature type="region of interest" description="Disordered" evidence="4">
    <location>
        <begin position="132"/>
        <end position="179"/>
    </location>
</feature>
<feature type="coiled-coil region" evidence="2">
    <location>
        <begin position="467"/>
        <end position="491"/>
    </location>
</feature>
<feature type="coiled-coil region" evidence="2">
    <location>
        <begin position="615"/>
        <end position="663"/>
    </location>
</feature>
<feature type="coiled-coil region" evidence="2">
    <location>
        <begin position="726"/>
        <end position="761"/>
    </location>
</feature>
<feature type="glycosylation site" description="N-linked (GlcNAc...) asparagine" evidence="2">
    <location>
        <position position="66"/>
    </location>
</feature>
<feature type="glycosylation site" description="N-linked (GlcNAc...) asparagine" evidence="2">
    <location>
        <position position="443"/>
    </location>
</feature>
<feature type="glycosylation site" description="N-linked (GlcNAc...) asparagine" evidence="2">
    <location>
        <position position="562"/>
    </location>
</feature>
<feature type="glycosylation site" description="N-linked (GlcNAc...) asparagine" evidence="2">
    <location>
        <position position="616"/>
    </location>
</feature>
<feature type="glycosylation site" description="N-linked (GlcNAc...) asparagine" evidence="2">
    <location>
        <position position="732"/>
    </location>
</feature>
<feature type="disulfide bond" evidence="3">
    <location>
        <begin position="59"/>
        <end position="121"/>
    </location>
</feature>
<feature type="disulfide bond" evidence="3">
    <location>
        <begin position="86"/>
        <end position="92"/>
    </location>
</feature>
<feature type="disulfide bond" evidence="3">
    <location>
        <begin position="120"/>
        <end position="129"/>
    </location>
</feature>
<feature type="splice variant" id="VSP_055481" description="In isoform 2." evidence="6">
    <location>
        <begin position="1"/>
        <end position="394"/>
    </location>
</feature>
<feature type="sequence variant" id="VAR_053075" description="In dbSNP:rs2235592." evidence="5">
    <original>S</original>
    <variation>N</variation>
    <location>
        <position position="532"/>
    </location>
</feature>
<keyword id="KW-0025">Alternative splicing</keyword>
<keyword id="KW-0175">Coiled coil</keyword>
<keyword id="KW-1015">Disulfide bond</keyword>
<keyword id="KW-0272">Extracellular matrix</keyword>
<keyword id="KW-0325">Glycoprotein</keyword>
<keyword id="KW-1267">Proteomics identification</keyword>
<keyword id="KW-1185">Reference proteome</keyword>
<keyword id="KW-0964">Secreted</keyword>
<keyword id="KW-0732">Signal</keyword>
<accession>Q9NT22</accession>
<accession>Q495S5</accession>
<accession>Q495S6</accession>
<accession>Q495S7</accession>
<accession>Q76KT4</accession>
<gene>
    <name type="primary">EMILIN3</name>
    <name type="synonym">C20orf130</name>
    <name type="synonym">EMILIN5</name>
</gene>
<dbReference type="EMBL" id="AB089149">
    <property type="protein sequence ID" value="BAD11034.1"/>
    <property type="molecule type" value="mRNA"/>
</dbReference>
<dbReference type="EMBL" id="AL031667">
    <property type="status" value="NOT_ANNOTATED_CDS"/>
    <property type="molecule type" value="Genomic_DNA"/>
</dbReference>
<dbReference type="EMBL" id="BC101043">
    <property type="protein sequence ID" value="AAI01044.1"/>
    <property type="molecule type" value="mRNA"/>
</dbReference>
<dbReference type="EMBL" id="BC101044">
    <property type="status" value="NOT_ANNOTATED_CDS"/>
    <property type="molecule type" value="mRNA"/>
</dbReference>
<dbReference type="EMBL" id="BC101045">
    <property type="protein sequence ID" value="AAI01046.1"/>
    <property type="molecule type" value="mRNA"/>
</dbReference>
<dbReference type="EMBL" id="BC101046">
    <property type="protein sequence ID" value="AAI01047.1"/>
    <property type="molecule type" value="mRNA"/>
</dbReference>
<dbReference type="EMBL" id="AL137580">
    <property type="protein sequence ID" value="CAB70822.1"/>
    <property type="molecule type" value="mRNA"/>
</dbReference>
<dbReference type="CCDS" id="CCDS13316.1">
    <molecule id="Q9NT22-1"/>
</dbReference>
<dbReference type="PIR" id="T46290">
    <property type="entry name" value="T46290"/>
</dbReference>
<dbReference type="RefSeq" id="NP_443078.1">
    <molecule id="Q9NT22-1"/>
    <property type="nucleotide sequence ID" value="NM_052846.2"/>
</dbReference>
<dbReference type="BioGRID" id="124673">
    <property type="interactions" value="66"/>
</dbReference>
<dbReference type="FunCoup" id="Q9NT22">
    <property type="interactions" value="259"/>
</dbReference>
<dbReference type="IntAct" id="Q9NT22">
    <property type="interactions" value="48"/>
</dbReference>
<dbReference type="STRING" id="9606.ENSP00000332806"/>
<dbReference type="GlyCosmos" id="Q9NT22">
    <property type="glycosylation" value="6 sites, 1 glycan"/>
</dbReference>
<dbReference type="GlyGen" id="Q9NT22">
    <property type="glycosylation" value="6 sites, 4 N-linked glycans (4 sites), 1 O-linked glycan (1 site)"/>
</dbReference>
<dbReference type="iPTMnet" id="Q9NT22"/>
<dbReference type="PhosphoSitePlus" id="Q9NT22"/>
<dbReference type="BioMuta" id="EMILIN3"/>
<dbReference type="DMDM" id="55584183"/>
<dbReference type="jPOST" id="Q9NT22"/>
<dbReference type="MassIVE" id="Q9NT22"/>
<dbReference type="PaxDb" id="9606-ENSP00000332806"/>
<dbReference type="PeptideAtlas" id="Q9NT22"/>
<dbReference type="ProteomicsDB" id="82600">
    <molecule id="Q9NT22-1"/>
</dbReference>
<dbReference type="Pumba" id="Q9NT22"/>
<dbReference type="Antibodypedia" id="57328">
    <property type="antibodies" value="79 antibodies from 18 providers"/>
</dbReference>
<dbReference type="DNASU" id="90187"/>
<dbReference type="Ensembl" id="ENST00000332312.4">
    <molecule id="Q9NT22-1"/>
    <property type="protein sequence ID" value="ENSP00000332806.3"/>
    <property type="gene ID" value="ENSG00000183798.5"/>
</dbReference>
<dbReference type="GeneID" id="90187"/>
<dbReference type="KEGG" id="hsa:90187"/>
<dbReference type="MANE-Select" id="ENST00000332312.4">
    <property type="protein sequence ID" value="ENSP00000332806.3"/>
    <property type="RefSeq nucleotide sequence ID" value="NM_052846.2"/>
    <property type="RefSeq protein sequence ID" value="NP_443078.1"/>
</dbReference>
<dbReference type="UCSC" id="uc002xjy.2">
    <molecule id="Q9NT22-1"/>
    <property type="organism name" value="human"/>
</dbReference>
<dbReference type="AGR" id="HGNC:16123"/>
<dbReference type="CTD" id="90187"/>
<dbReference type="DisGeNET" id="90187"/>
<dbReference type="GeneCards" id="EMILIN3"/>
<dbReference type="HGNC" id="HGNC:16123">
    <property type="gene designation" value="EMILIN3"/>
</dbReference>
<dbReference type="HPA" id="ENSG00000183798">
    <property type="expression patterns" value="Tissue enriched (epididymis)"/>
</dbReference>
<dbReference type="MIM" id="608929">
    <property type="type" value="gene"/>
</dbReference>
<dbReference type="neXtProt" id="NX_Q9NT22"/>
<dbReference type="OpenTargets" id="ENSG00000183798"/>
<dbReference type="PharmGKB" id="PA164741521"/>
<dbReference type="VEuPathDB" id="HostDB:ENSG00000183798"/>
<dbReference type="eggNOG" id="ENOG502QV8J">
    <property type="taxonomic scope" value="Eukaryota"/>
</dbReference>
<dbReference type="GeneTree" id="ENSGT01030000234633"/>
<dbReference type="HOGENOM" id="CLU_011705_1_0_1"/>
<dbReference type="InParanoid" id="Q9NT22"/>
<dbReference type="OMA" id="EDCQNKN"/>
<dbReference type="OrthoDB" id="10266508at2759"/>
<dbReference type="PAN-GO" id="Q9NT22">
    <property type="GO annotations" value="0 GO annotations based on evolutionary models"/>
</dbReference>
<dbReference type="PhylomeDB" id="Q9NT22"/>
<dbReference type="TreeFam" id="TF331033"/>
<dbReference type="PathwayCommons" id="Q9NT22"/>
<dbReference type="Reactome" id="R-HSA-2129379">
    <property type="pathway name" value="Molecules associated with elastic fibres"/>
</dbReference>
<dbReference type="SignaLink" id="Q9NT22"/>
<dbReference type="BioGRID-ORCS" id="90187">
    <property type="hits" value="12 hits in 1135 CRISPR screens"/>
</dbReference>
<dbReference type="GenomeRNAi" id="90187"/>
<dbReference type="Pharos" id="Q9NT22">
    <property type="development level" value="Tbio"/>
</dbReference>
<dbReference type="PRO" id="PR:Q9NT22"/>
<dbReference type="Proteomes" id="UP000005640">
    <property type="component" value="Chromosome 20"/>
</dbReference>
<dbReference type="RNAct" id="Q9NT22">
    <property type="molecule type" value="protein"/>
</dbReference>
<dbReference type="Bgee" id="ENSG00000183798">
    <property type="expression patterns" value="Expressed in corpus epididymis and 125 other cell types or tissues"/>
</dbReference>
<dbReference type="GO" id="GO:0062023">
    <property type="term" value="C:collagen-containing extracellular matrix"/>
    <property type="evidence" value="ECO:0007005"/>
    <property type="project" value="BHF-UCL"/>
</dbReference>
<dbReference type="GO" id="GO:0005737">
    <property type="term" value="C:cytoplasm"/>
    <property type="evidence" value="ECO:0007669"/>
    <property type="project" value="Ensembl"/>
</dbReference>
<dbReference type="GO" id="GO:0005576">
    <property type="term" value="C:extracellular region"/>
    <property type="evidence" value="ECO:0007669"/>
    <property type="project" value="UniProtKB-KW"/>
</dbReference>
<dbReference type="GO" id="GO:0030023">
    <property type="term" value="F:extracellular matrix constituent conferring elasticity"/>
    <property type="evidence" value="ECO:0000250"/>
    <property type="project" value="BHF-UCL"/>
</dbReference>
<dbReference type="GO" id="GO:0042802">
    <property type="term" value="F:identical protein binding"/>
    <property type="evidence" value="ECO:0000353"/>
    <property type="project" value="IntAct"/>
</dbReference>
<dbReference type="FunFam" id="1.10.287.1490:FF:000021">
    <property type="entry name" value="Elastin microfibril interfacer 3"/>
    <property type="match status" value="1"/>
</dbReference>
<dbReference type="Gene3D" id="1.10.287.1490">
    <property type="match status" value="1"/>
</dbReference>
<dbReference type="InterPro" id="IPR050392">
    <property type="entry name" value="Collagen/C1q_domain"/>
</dbReference>
<dbReference type="InterPro" id="IPR011489">
    <property type="entry name" value="EMI_domain"/>
</dbReference>
<dbReference type="PANTHER" id="PTHR15427">
    <property type="entry name" value="EMILIN ELASTIN MICROFIBRIL INTERFACE-LOCATED PROTEIN ELASTIN MICROFIBRIL INTERFACER"/>
    <property type="match status" value="1"/>
</dbReference>
<dbReference type="PANTHER" id="PTHR15427:SF2">
    <property type="entry name" value="EMILIN-3"/>
    <property type="match status" value="1"/>
</dbReference>
<dbReference type="Pfam" id="PF07546">
    <property type="entry name" value="EMI"/>
    <property type="match status" value="1"/>
</dbReference>
<dbReference type="PROSITE" id="PS51041">
    <property type="entry name" value="EMI"/>
    <property type="match status" value="1"/>
</dbReference>
<protein>
    <recommendedName>
        <fullName>EMILIN-3</fullName>
    </recommendedName>
    <alternativeName>
        <fullName>EMILIN-5</fullName>
    </alternativeName>
    <alternativeName>
        <fullName>Elastin microfibril interface-located protein 3</fullName>
        <shortName>Elastin microfibril interfacer 3</shortName>
    </alternativeName>
    <alternativeName>
        <fullName>Elastin microfibril interface-located protein 5</fullName>
        <shortName>Elastin microfibril interfacer 5</shortName>
    </alternativeName>
</protein>